<feature type="chain" id="PRO_1000099743" description="3-phosphoshikimate 1-carboxyvinyltransferase">
    <location>
        <begin position="1"/>
        <end position="445"/>
    </location>
</feature>
<feature type="region of interest" description="Disordered" evidence="2">
    <location>
        <begin position="1"/>
        <end position="25"/>
    </location>
</feature>
<feature type="active site" description="Proton acceptor" evidence="1">
    <location>
        <position position="328"/>
    </location>
</feature>
<feature type="binding site" evidence="1">
    <location>
        <position position="28"/>
    </location>
    <ligand>
        <name>3-phosphoshikimate</name>
        <dbReference type="ChEBI" id="CHEBI:145989"/>
    </ligand>
</feature>
<feature type="binding site" evidence="1">
    <location>
        <position position="28"/>
    </location>
    <ligand>
        <name>phosphoenolpyruvate</name>
        <dbReference type="ChEBI" id="CHEBI:58702"/>
    </ligand>
</feature>
<feature type="binding site" evidence="1">
    <location>
        <position position="29"/>
    </location>
    <ligand>
        <name>3-phosphoshikimate</name>
        <dbReference type="ChEBI" id="CHEBI:145989"/>
    </ligand>
</feature>
<feature type="binding site" evidence="1">
    <location>
        <position position="33"/>
    </location>
    <ligand>
        <name>3-phosphoshikimate</name>
        <dbReference type="ChEBI" id="CHEBI:145989"/>
    </ligand>
</feature>
<feature type="binding site" evidence="1">
    <location>
        <position position="101"/>
    </location>
    <ligand>
        <name>phosphoenolpyruvate</name>
        <dbReference type="ChEBI" id="CHEBI:58702"/>
    </ligand>
</feature>
<feature type="binding site" evidence="1">
    <location>
        <position position="129"/>
    </location>
    <ligand>
        <name>phosphoenolpyruvate</name>
        <dbReference type="ChEBI" id="CHEBI:58702"/>
    </ligand>
</feature>
<feature type="binding site" evidence="1">
    <location>
        <position position="175"/>
    </location>
    <ligand>
        <name>3-phosphoshikimate</name>
        <dbReference type="ChEBI" id="CHEBI:145989"/>
    </ligand>
</feature>
<feature type="binding site" evidence="1">
    <location>
        <position position="177"/>
    </location>
    <ligand>
        <name>3-phosphoshikimate</name>
        <dbReference type="ChEBI" id="CHEBI:145989"/>
    </ligand>
</feature>
<feature type="binding site" evidence="1">
    <location>
        <position position="177"/>
    </location>
    <ligand>
        <name>phosphoenolpyruvate</name>
        <dbReference type="ChEBI" id="CHEBI:58702"/>
    </ligand>
</feature>
<feature type="binding site" evidence="1">
    <location>
        <position position="328"/>
    </location>
    <ligand>
        <name>3-phosphoshikimate</name>
        <dbReference type="ChEBI" id="CHEBI:145989"/>
    </ligand>
</feature>
<feature type="binding site" evidence="1">
    <location>
        <position position="355"/>
    </location>
    <ligand>
        <name>3-phosphoshikimate</name>
        <dbReference type="ChEBI" id="CHEBI:145989"/>
    </ligand>
</feature>
<feature type="binding site" evidence="1">
    <location>
        <position position="359"/>
    </location>
    <ligand>
        <name>phosphoenolpyruvate</name>
        <dbReference type="ChEBI" id="CHEBI:58702"/>
    </ligand>
</feature>
<feature type="binding site" evidence="1">
    <location>
        <position position="402"/>
    </location>
    <ligand>
        <name>phosphoenolpyruvate</name>
        <dbReference type="ChEBI" id="CHEBI:58702"/>
    </ligand>
</feature>
<keyword id="KW-0028">Amino-acid biosynthesis</keyword>
<keyword id="KW-0057">Aromatic amino acid biosynthesis</keyword>
<keyword id="KW-0963">Cytoplasm</keyword>
<keyword id="KW-0808">Transferase</keyword>
<dbReference type="EC" id="2.5.1.19" evidence="1"/>
<dbReference type="EMBL" id="CP001096">
    <property type="protein sequence ID" value="ACE98626.1"/>
    <property type="molecule type" value="Genomic_DNA"/>
</dbReference>
<dbReference type="RefSeq" id="WP_012493896.1">
    <property type="nucleotide sequence ID" value="NC_011004.1"/>
</dbReference>
<dbReference type="SMR" id="B3Q5Z7"/>
<dbReference type="KEGG" id="rpt:Rpal_0064"/>
<dbReference type="HOGENOM" id="CLU_024321_0_1_5"/>
<dbReference type="OrthoDB" id="9809920at2"/>
<dbReference type="UniPathway" id="UPA00053">
    <property type="reaction ID" value="UER00089"/>
</dbReference>
<dbReference type="Proteomes" id="UP000001725">
    <property type="component" value="Chromosome"/>
</dbReference>
<dbReference type="GO" id="GO:0005737">
    <property type="term" value="C:cytoplasm"/>
    <property type="evidence" value="ECO:0007669"/>
    <property type="project" value="UniProtKB-SubCell"/>
</dbReference>
<dbReference type="GO" id="GO:0003866">
    <property type="term" value="F:3-phosphoshikimate 1-carboxyvinyltransferase activity"/>
    <property type="evidence" value="ECO:0007669"/>
    <property type="project" value="UniProtKB-UniRule"/>
</dbReference>
<dbReference type="GO" id="GO:0008652">
    <property type="term" value="P:amino acid biosynthetic process"/>
    <property type="evidence" value="ECO:0007669"/>
    <property type="project" value="UniProtKB-KW"/>
</dbReference>
<dbReference type="GO" id="GO:0009073">
    <property type="term" value="P:aromatic amino acid family biosynthetic process"/>
    <property type="evidence" value="ECO:0007669"/>
    <property type="project" value="UniProtKB-KW"/>
</dbReference>
<dbReference type="GO" id="GO:0009423">
    <property type="term" value="P:chorismate biosynthetic process"/>
    <property type="evidence" value="ECO:0007669"/>
    <property type="project" value="UniProtKB-UniRule"/>
</dbReference>
<dbReference type="CDD" id="cd01556">
    <property type="entry name" value="EPSP_synthase"/>
    <property type="match status" value="1"/>
</dbReference>
<dbReference type="FunFam" id="3.65.10.10:FF:000005">
    <property type="entry name" value="3-phosphoshikimate 1-carboxyvinyltransferase"/>
    <property type="match status" value="1"/>
</dbReference>
<dbReference type="FunFam" id="3.65.10.10:FF:000006">
    <property type="entry name" value="3-phosphoshikimate 1-carboxyvinyltransferase"/>
    <property type="match status" value="1"/>
</dbReference>
<dbReference type="Gene3D" id="3.65.10.10">
    <property type="entry name" value="Enolpyruvate transferase domain"/>
    <property type="match status" value="2"/>
</dbReference>
<dbReference type="HAMAP" id="MF_00210">
    <property type="entry name" value="EPSP_synth"/>
    <property type="match status" value="1"/>
</dbReference>
<dbReference type="InterPro" id="IPR001986">
    <property type="entry name" value="Enolpyruvate_Tfrase_dom"/>
</dbReference>
<dbReference type="InterPro" id="IPR036968">
    <property type="entry name" value="Enolpyruvate_Tfrase_sf"/>
</dbReference>
<dbReference type="InterPro" id="IPR006264">
    <property type="entry name" value="EPSP_synthase"/>
</dbReference>
<dbReference type="InterPro" id="IPR023193">
    <property type="entry name" value="EPSP_synthase_CS"/>
</dbReference>
<dbReference type="InterPro" id="IPR013792">
    <property type="entry name" value="RNA3'P_cycl/enolpyr_Trfase_a/b"/>
</dbReference>
<dbReference type="NCBIfam" id="TIGR01356">
    <property type="entry name" value="aroA"/>
    <property type="match status" value="1"/>
</dbReference>
<dbReference type="PANTHER" id="PTHR21090">
    <property type="entry name" value="AROM/DEHYDROQUINATE SYNTHASE"/>
    <property type="match status" value="1"/>
</dbReference>
<dbReference type="PANTHER" id="PTHR21090:SF5">
    <property type="entry name" value="PENTAFUNCTIONAL AROM POLYPEPTIDE"/>
    <property type="match status" value="1"/>
</dbReference>
<dbReference type="Pfam" id="PF00275">
    <property type="entry name" value="EPSP_synthase"/>
    <property type="match status" value="1"/>
</dbReference>
<dbReference type="PIRSF" id="PIRSF000505">
    <property type="entry name" value="EPSPS"/>
    <property type="match status" value="1"/>
</dbReference>
<dbReference type="SUPFAM" id="SSF55205">
    <property type="entry name" value="EPT/RTPC-like"/>
    <property type="match status" value="1"/>
</dbReference>
<dbReference type="PROSITE" id="PS00104">
    <property type="entry name" value="EPSP_SYNTHASE_1"/>
    <property type="match status" value="1"/>
</dbReference>
<dbReference type="PROSITE" id="PS00885">
    <property type="entry name" value="EPSP_SYNTHASE_2"/>
    <property type="match status" value="1"/>
</dbReference>
<proteinExistence type="inferred from homology"/>
<comment type="function">
    <text evidence="1">Catalyzes the transfer of the enolpyruvyl moiety of phosphoenolpyruvate (PEP) to the 5-hydroxyl of shikimate-3-phosphate (S3P) to produce enolpyruvyl shikimate-3-phosphate and inorganic phosphate.</text>
</comment>
<comment type="catalytic activity">
    <reaction evidence="1">
        <text>3-phosphoshikimate + phosphoenolpyruvate = 5-O-(1-carboxyvinyl)-3-phosphoshikimate + phosphate</text>
        <dbReference type="Rhea" id="RHEA:21256"/>
        <dbReference type="ChEBI" id="CHEBI:43474"/>
        <dbReference type="ChEBI" id="CHEBI:57701"/>
        <dbReference type="ChEBI" id="CHEBI:58702"/>
        <dbReference type="ChEBI" id="CHEBI:145989"/>
        <dbReference type="EC" id="2.5.1.19"/>
    </reaction>
    <physiologicalReaction direction="left-to-right" evidence="1">
        <dbReference type="Rhea" id="RHEA:21257"/>
    </physiologicalReaction>
</comment>
<comment type="pathway">
    <text evidence="1">Metabolic intermediate biosynthesis; chorismate biosynthesis; chorismate from D-erythrose 4-phosphate and phosphoenolpyruvate: step 6/7.</text>
</comment>
<comment type="subunit">
    <text evidence="1">Monomer.</text>
</comment>
<comment type="subcellular location">
    <subcellularLocation>
        <location evidence="1">Cytoplasm</location>
    </subcellularLocation>
</comment>
<comment type="similarity">
    <text evidence="1">Belongs to the EPSP synthase family.</text>
</comment>
<organism>
    <name type="scientific">Rhodopseudomonas palustris (strain TIE-1)</name>
    <dbReference type="NCBI Taxonomy" id="395960"/>
    <lineage>
        <taxon>Bacteria</taxon>
        <taxon>Pseudomonadati</taxon>
        <taxon>Pseudomonadota</taxon>
        <taxon>Alphaproteobacteria</taxon>
        <taxon>Hyphomicrobiales</taxon>
        <taxon>Nitrobacteraceae</taxon>
        <taxon>Rhodopseudomonas</taxon>
    </lineage>
</organism>
<evidence type="ECO:0000255" key="1">
    <source>
        <dbReference type="HAMAP-Rule" id="MF_00210"/>
    </source>
</evidence>
<evidence type="ECO:0000256" key="2">
    <source>
        <dbReference type="SAM" id="MobiDB-lite"/>
    </source>
</evidence>
<name>AROA_RHOPT</name>
<reference key="1">
    <citation type="submission" date="2008-05" db="EMBL/GenBank/DDBJ databases">
        <title>Complete sequence of Rhodopseudomonas palustris TIE-1.</title>
        <authorList>
            <consortium name="US DOE Joint Genome Institute"/>
            <person name="Lucas S."/>
            <person name="Copeland A."/>
            <person name="Lapidus A."/>
            <person name="Glavina del Rio T."/>
            <person name="Dalin E."/>
            <person name="Tice H."/>
            <person name="Pitluck S."/>
            <person name="Chain P."/>
            <person name="Malfatti S."/>
            <person name="Shin M."/>
            <person name="Vergez L."/>
            <person name="Lang D."/>
            <person name="Schmutz J."/>
            <person name="Larimer F."/>
            <person name="Land M."/>
            <person name="Hauser L."/>
            <person name="Kyrpides N."/>
            <person name="Mikhailova N."/>
            <person name="Emerson D."/>
            <person name="Newman D.K."/>
            <person name="Roden E."/>
            <person name="Richardson P."/>
        </authorList>
    </citation>
    <scope>NUCLEOTIDE SEQUENCE [LARGE SCALE GENOMIC DNA]</scope>
    <source>
        <strain>TIE-1</strain>
    </source>
</reference>
<gene>
    <name evidence="1" type="primary">aroA</name>
    <name type="ordered locus">Rpal_0064</name>
</gene>
<sequence>MTDSNQPTPLQARKSGALHGTARVPGDKSISHRALILGALAVGETRISGLLEGEDVINTAKAMRALGAKVERTGDCEWRVHGVGVAGFATPEAPLDFGNSGTGCRLAMGAVAGSPIVATFDGDASLRSRPMRRIVDPLELMGAKVVSSSEGGRLPLALQGARDPLPILYRTPVPSAQIKSAVLLAGLSAPGVTTVIEAEASRDHTELMLQHFGATIVTEAEGAHGRKISLTGQPELRGAPVVVPADPSSAAFPMVAALVVPGSDIELTDVMTNPLRTGLITTLREMGALIEDSDVRGDAGEPMARFRVRGSKLKGVEVPPERAPSMIDEYLVLAVAAAFAEGTTVMRGLHELRVKESDRLEATAAMLRVNGVAVEIAGDDLIVEGKGHVPGGGVVATHMDHRIAMSALAMGLASDKPVTVDDTAFIATSFPDFVPMMQRLGAEFG</sequence>
<accession>B3Q5Z7</accession>
<protein>
    <recommendedName>
        <fullName evidence="1">3-phosphoshikimate 1-carboxyvinyltransferase</fullName>
        <ecNumber evidence="1">2.5.1.19</ecNumber>
    </recommendedName>
    <alternativeName>
        <fullName evidence="1">5-enolpyruvylshikimate-3-phosphate synthase</fullName>
        <shortName evidence="1">EPSP synthase</shortName>
        <shortName evidence="1">EPSPS</shortName>
    </alternativeName>
</protein>